<accession>Q01872</accession>
<proteinExistence type="inferred from homology"/>
<comment type="function">
    <text>Krueppel is a gap class segmentation protein.</text>
</comment>
<comment type="subcellular location">
    <subcellularLocation>
        <location evidence="2">Nucleus</location>
    </subcellularLocation>
</comment>
<comment type="similarity">
    <text evidence="2">Belongs to the krueppel C2H2-type zinc-finger protein family.</text>
</comment>
<gene>
    <name type="primary">Kr</name>
</gene>
<dbReference type="EMBL" id="L01598">
    <property type="protein sequence ID" value="AAA29280.1"/>
    <property type="molecule type" value="Genomic_DNA"/>
</dbReference>
<dbReference type="SMR" id="Q01872"/>
<dbReference type="GO" id="GO:0005634">
    <property type="term" value="C:nucleus"/>
    <property type="evidence" value="ECO:0007669"/>
    <property type="project" value="UniProtKB-SubCell"/>
</dbReference>
<dbReference type="GO" id="GO:0003677">
    <property type="term" value="F:DNA binding"/>
    <property type="evidence" value="ECO:0007669"/>
    <property type="project" value="UniProtKB-KW"/>
</dbReference>
<dbReference type="GO" id="GO:0008270">
    <property type="term" value="F:zinc ion binding"/>
    <property type="evidence" value="ECO:0007669"/>
    <property type="project" value="UniProtKB-KW"/>
</dbReference>
<dbReference type="GO" id="GO:0035282">
    <property type="term" value="P:segmentation"/>
    <property type="evidence" value="ECO:0007669"/>
    <property type="project" value="UniProtKB-KW"/>
</dbReference>
<dbReference type="FunFam" id="3.30.160.60:FF:000912">
    <property type="entry name" value="Zinc finger protein 660"/>
    <property type="match status" value="1"/>
</dbReference>
<dbReference type="Gene3D" id="3.30.160.60">
    <property type="entry name" value="Classic Zinc Finger"/>
    <property type="match status" value="2"/>
</dbReference>
<dbReference type="InterPro" id="IPR036236">
    <property type="entry name" value="Znf_C2H2_sf"/>
</dbReference>
<dbReference type="InterPro" id="IPR013087">
    <property type="entry name" value="Znf_C2H2_type"/>
</dbReference>
<dbReference type="PANTHER" id="PTHR23235">
    <property type="entry name" value="KRUEPPEL-LIKE TRANSCRIPTION FACTOR"/>
    <property type="match status" value="1"/>
</dbReference>
<dbReference type="SMART" id="SM00355">
    <property type="entry name" value="ZnF_C2H2"/>
    <property type="match status" value="1"/>
</dbReference>
<dbReference type="SUPFAM" id="SSF57667">
    <property type="entry name" value="beta-beta-alpha zinc fingers"/>
    <property type="match status" value="1"/>
</dbReference>
<dbReference type="PROSITE" id="PS00028">
    <property type="entry name" value="ZINC_FINGER_C2H2_1"/>
    <property type="match status" value="1"/>
</dbReference>
<dbReference type="PROSITE" id="PS50157">
    <property type="entry name" value="ZINC_FINGER_C2H2_2"/>
    <property type="match status" value="1"/>
</dbReference>
<sequence>MRLHTGEKPYHCTHCERQFVQVANLRRHLRVHTGERPYACELCTSK</sequence>
<name>KRUP_LITFO</name>
<organism>
    <name type="scientific">Lithobius forficatus</name>
    <name type="common">Centipede</name>
    <name type="synonym">Scolopendra forficatus</name>
    <dbReference type="NCBI Taxonomy" id="3396457"/>
    <lineage>
        <taxon>Eukaryota</taxon>
        <taxon>Metazoa</taxon>
        <taxon>Ecdysozoa</taxon>
        <taxon>Arthropoda</taxon>
        <taxon>Myriapoda</taxon>
        <taxon>Chilopoda</taxon>
        <taxon>Pleurostigmophora</taxon>
        <taxon>Lithobiomorpha</taxon>
        <taxon>Lithobiidae</taxon>
        <taxon>Lithobius</taxon>
    </lineage>
</organism>
<protein>
    <recommendedName>
        <fullName>Protein krueppel</fullName>
    </recommendedName>
</protein>
<feature type="chain" id="PRO_0000046996" description="Protein krueppel">
    <location>
        <begin position="1" status="less than"/>
        <end position="46" status="greater than"/>
    </location>
</feature>
<feature type="zinc finger region" description="C2H2-type 1" evidence="1">
    <location>
        <begin position="1" status="less than"/>
        <end position="4"/>
    </location>
</feature>
<feature type="zinc finger region" description="C2H2-type 2" evidence="1">
    <location>
        <begin position="10"/>
        <end position="32"/>
    </location>
</feature>
<feature type="zinc finger region" description="C2H2-type 3" evidence="1">
    <location>
        <begin position="38"/>
        <end position="46" status="greater than"/>
    </location>
</feature>
<feature type="non-terminal residue">
    <location>
        <position position="1"/>
    </location>
</feature>
<feature type="non-terminal residue">
    <location>
        <position position="46"/>
    </location>
</feature>
<evidence type="ECO:0000255" key="1">
    <source>
        <dbReference type="PROSITE-ProRule" id="PRU00042"/>
    </source>
</evidence>
<evidence type="ECO:0000305" key="2"/>
<keyword id="KW-0217">Developmental protein</keyword>
<keyword id="KW-0238">DNA-binding</keyword>
<keyword id="KW-0302">Gap protein</keyword>
<keyword id="KW-0479">Metal-binding</keyword>
<keyword id="KW-0539">Nucleus</keyword>
<keyword id="KW-0677">Repeat</keyword>
<keyword id="KW-0862">Zinc</keyword>
<keyword id="KW-0863">Zinc-finger</keyword>
<reference key="1">
    <citation type="journal article" date="1992" name="Proc. Natl. Acad. Sci. U.S.A.">
        <title>Evolutionary conservation pattern of zinc-finger domains of Drosophila segmentation genes.</title>
        <authorList>
            <person name="Sommer R.J."/>
            <person name="Retzlaff M."/>
            <person name="Goerlich K."/>
            <person name="Sander K."/>
            <person name="Tautz D."/>
        </authorList>
    </citation>
    <scope>NUCLEOTIDE SEQUENCE [GENOMIC DNA]</scope>
</reference>